<comment type="subcellular location">
    <subcellularLocation>
        <location evidence="3">Secreted</location>
    </subcellularLocation>
</comment>
<comment type="tissue specificity">
    <text evidence="4">Expressed in mammary glands.</text>
</comment>
<comment type="similarity">
    <text evidence="3">Belongs to the histatin/statherin family.</text>
</comment>
<keyword id="KW-1185">Reference proteome</keyword>
<keyword id="KW-0964">Secreted</keyword>
<keyword id="KW-0732">Signal</keyword>
<feature type="signal peptide" evidence="1">
    <location>
        <begin position="1"/>
        <end position="19"/>
    </location>
</feature>
<feature type="chain" id="PRO_5005668772" description="Histatherin" evidence="1">
    <location>
        <begin position="20"/>
        <end position="58"/>
    </location>
</feature>
<evidence type="ECO:0000255" key="1"/>
<evidence type="ECO:0000303" key="2">
    <source ref="1"/>
</evidence>
<evidence type="ECO:0000305" key="3"/>
<evidence type="ECO:0000305" key="4">
    <source ref="1"/>
</evidence>
<evidence type="ECO:0000312" key="5">
    <source>
        <dbReference type="Proteomes" id="UP000009136"/>
    </source>
</evidence>
<sequence length="58" mass="7233">MKIFIFIFIMALILAMIRADSSEEKRHRKRKKHHRGYFQQYQPYQRYPLNYPPAYPFP</sequence>
<reference key="1">
    <citation type="submission" date="2009-05" db="EMBL/GenBank/DDBJ databases">
        <title>Compositions Isolated from Bovine Mammary Gland and Methods for their Use; Patent: US 006833435B2-B 21-DEC-2004.</title>
        <authorList>
            <person name="Glenn M."/>
            <person name="Grigor M.R."/>
            <person name="Molenaar A.J."/>
            <person name="Davis S.R."/>
        </authorList>
    </citation>
    <scope>NUCLEOTIDE SEQUENCE [MRNA]</scope>
    <scope>IDENTIFICATION</scope>
    <scope>TISSUE SPECIFICITY</scope>
</reference>
<reference key="2">
    <citation type="journal article" date="2009" name="Genome Biol.">
        <title>A whole-genome assembly of the domestic cow, Bos taurus.</title>
        <authorList>
            <person name="Zimin A.V."/>
            <person name="Delcher A.L."/>
            <person name="Florea L."/>
            <person name="Kelley D.R."/>
            <person name="Schatz M.C."/>
            <person name="Puiu D."/>
            <person name="Hanrahan F."/>
            <person name="Pertea G."/>
            <person name="Van Tassell C.P."/>
            <person name="Sonstegard T.S."/>
            <person name="Marcais G."/>
            <person name="Roberts M."/>
            <person name="Subramanian P."/>
            <person name="Yorke J.A."/>
            <person name="Salzberg S.L."/>
        </authorList>
    </citation>
    <scope>NUCLEOTIDE SEQUENCE [LARGE SCALE GENOMIC DNA]</scope>
    <source>
        <strain>Hereford</strain>
    </source>
</reference>
<gene>
    <name evidence="2" type="primary">HSTN</name>
</gene>
<accession>C6KGD8</accession>
<name>HSTN_BOVIN</name>
<proteinExistence type="evidence at transcript level"/>
<dbReference type="EMBL" id="GQ204113">
    <property type="protein sequence ID" value="ACS92704.1"/>
    <property type="molecule type" value="mRNA"/>
</dbReference>
<dbReference type="EMBL" id="GQ204115">
    <property type="protein sequence ID" value="ACS92706.1"/>
    <property type="molecule type" value="mRNA"/>
</dbReference>
<dbReference type="EMBL" id="DAAA02018006">
    <property type="status" value="NOT_ANNOTATED_CDS"/>
    <property type="molecule type" value="Genomic_DNA"/>
</dbReference>
<dbReference type="EMBL" id="DAAA02018007">
    <property type="status" value="NOT_ANNOTATED_CDS"/>
    <property type="molecule type" value="Genomic_DNA"/>
</dbReference>
<dbReference type="EMBL" id="DAAA02018008">
    <property type="status" value="NOT_ANNOTATED_CDS"/>
    <property type="molecule type" value="Genomic_DNA"/>
</dbReference>
<dbReference type="RefSeq" id="NP_001156886.1">
    <property type="nucleotide sequence ID" value="NM_001163414.1"/>
</dbReference>
<dbReference type="STRING" id="9913.ENSBTAP00000059405"/>
<dbReference type="PaxDb" id="9913-ENSBTAP00000054732"/>
<dbReference type="GeneID" id="100302500"/>
<dbReference type="KEGG" id="bta:100302500"/>
<dbReference type="CTD" id="100302500"/>
<dbReference type="HOGENOM" id="CLU_208169_0_0_1"/>
<dbReference type="InParanoid" id="C6KGD8"/>
<dbReference type="Proteomes" id="UP000009136">
    <property type="component" value="Unplaced"/>
</dbReference>
<dbReference type="GO" id="GO:0005576">
    <property type="term" value="C:extracellular region"/>
    <property type="evidence" value="ECO:0007669"/>
    <property type="project" value="UniProtKB-SubCell"/>
</dbReference>
<dbReference type="GO" id="GO:0042742">
    <property type="term" value="P:defense response to bacterium"/>
    <property type="evidence" value="ECO:0007669"/>
    <property type="project" value="InterPro"/>
</dbReference>
<dbReference type="InterPro" id="IPR030773">
    <property type="entry name" value="Histatin/statherin"/>
</dbReference>
<dbReference type="PANTHER" id="PTHR15057">
    <property type="entry name" value="STATHERIN"/>
    <property type="match status" value="1"/>
</dbReference>
<dbReference type="PANTHER" id="PTHR15057:SF3">
    <property type="entry name" value="STATHERIN"/>
    <property type="match status" value="1"/>
</dbReference>
<protein>
    <recommendedName>
        <fullName evidence="2">Histatherin</fullName>
    </recommendedName>
</protein>
<organism evidence="5">
    <name type="scientific">Bos taurus</name>
    <name type="common">Bovine</name>
    <dbReference type="NCBI Taxonomy" id="9913"/>
    <lineage>
        <taxon>Eukaryota</taxon>
        <taxon>Metazoa</taxon>
        <taxon>Chordata</taxon>
        <taxon>Craniata</taxon>
        <taxon>Vertebrata</taxon>
        <taxon>Euteleostomi</taxon>
        <taxon>Mammalia</taxon>
        <taxon>Eutheria</taxon>
        <taxon>Laurasiatheria</taxon>
        <taxon>Artiodactyla</taxon>
        <taxon>Ruminantia</taxon>
        <taxon>Pecora</taxon>
        <taxon>Bovidae</taxon>
        <taxon>Bovinae</taxon>
        <taxon>Bos</taxon>
    </lineage>
</organism>